<feature type="chain" id="PRO_0000125672" description="Large ribosomal subunit protein uL1">
    <location>
        <begin position="1"/>
        <end position="229"/>
    </location>
</feature>
<accession>Q88YW9</accession>
<accession>F9UL85</accession>
<sequence length="229" mass="24770">MAKKSKQYQDAAKLVDRDKAYDVTEAVDLVKKMDFAKFDATVEVAFKLNVDTKQADQQLRGAVVLPNGTGKDQTVIVFAKGDKAKEAEEAGADFVGETDLVQKIQDGWLDFDVAIATPDMMAQVGRLGRVLGPKGLMPNPKTGTVTMDVAKAVNDSKAGKVTYRTDRDGNVHVPVGKVSFDTDKLVGNFKTIEDTIVKARPASVRGTFIQNLVVTSTFTPAVRVDLASF</sequence>
<protein>
    <recommendedName>
        <fullName evidence="1">Large ribosomal subunit protein uL1</fullName>
    </recommendedName>
    <alternativeName>
        <fullName evidence="2">50S ribosomal protein L1</fullName>
    </alternativeName>
</protein>
<evidence type="ECO:0000255" key="1">
    <source>
        <dbReference type="HAMAP-Rule" id="MF_01318"/>
    </source>
</evidence>
<evidence type="ECO:0000305" key="2"/>
<comment type="function">
    <text evidence="1">Binds directly to 23S rRNA. The L1 stalk is quite mobile in the ribosome, and is involved in E site tRNA release.</text>
</comment>
<comment type="function">
    <text evidence="1">Protein L1 is also a translational repressor protein, it controls the translation of the L11 operon by binding to its mRNA.</text>
</comment>
<comment type="subunit">
    <text evidence="1">Part of the 50S ribosomal subunit.</text>
</comment>
<comment type="similarity">
    <text evidence="1">Belongs to the universal ribosomal protein uL1 family.</text>
</comment>
<organism>
    <name type="scientific">Lactiplantibacillus plantarum (strain ATCC BAA-793 / NCIMB 8826 / WCFS1)</name>
    <name type="common">Lactobacillus plantarum</name>
    <dbReference type="NCBI Taxonomy" id="220668"/>
    <lineage>
        <taxon>Bacteria</taxon>
        <taxon>Bacillati</taxon>
        <taxon>Bacillota</taxon>
        <taxon>Bacilli</taxon>
        <taxon>Lactobacillales</taxon>
        <taxon>Lactobacillaceae</taxon>
        <taxon>Lactiplantibacillus</taxon>
    </lineage>
</organism>
<reference key="1">
    <citation type="journal article" date="2003" name="Proc. Natl. Acad. Sci. U.S.A.">
        <title>Complete genome sequence of Lactobacillus plantarum WCFS1.</title>
        <authorList>
            <person name="Kleerebezem M."/>
            <person name="Boekhorst J."/>
            <person name="van Kranenburg R."/>
            <person name="Molenaar D."/>
            <person name="Kuipers O.P."/>
            <person name="Leer R."/>
            <person name="Tarchini R."/>
            <person name="Peters S.A."/>
            <person name="Sandbrink H.M."/>
            <person name="Fiers M.W.E.J."/>
            <person name="Stiekema W."/>
            <person name="Klein Lankhorst R.M."/>
            <person name="Bron P.A."/>
            <person name="Hoffer S.M."/>
            <person name="Nierop Groot M.N."/>
            <person name="Kerkhoven R."/>
            <person name="De Vries M."/>
            <person name="Ursing B."/>
            <person name="De Vos W.M."/>
            <person name="Siezen R.J."/>
        </authorList>
    </citation>
    <scope>NUCLEOTIDE SEQUENCE [LARGE SCALE GENOMIC DNA]</scope>
    <source>
        <strain>ATCC BAA-793 / NCIMB 8826 / WCFS1</strain>
    </source>
</reference>
<reference key="2">
    <citation type="journal article" date="2012" name="J. Bacteriol.">
        <title>Complete resequencing and reannotation of the Lactobacillus plantarum WCFS1 genome.</title>
        <authorList>
            <person name="Siezen R.J."/>
            <person name="Francke C."/>
            <person name="Renckens B."/>
            <person name="Boekhorst J."/>
            <person name="Wels M."/>
            <person name="Kleerebezem M."/>
            <person name="van Hijum S.A."/>
        </authorList>
    </citation>
    <scope>NUCLEOTIDE SEQUENCE [LARGE SCALE GENOMIC DNA]</scope>
    <scope>GENOME REANNOTATION</scope>
    <source>
        <strain>ATCC BAA-793 / NCIMB 8826 / WCFS1</strain>
    </source>
</reference>
<name>RL1_LACPL</name>
<gene>
    <name evidence="1" type="primary">rplA</name>
    <name type="ordered locus">lp_0620</name>
</gene>
<keyword id="KW-1185">Reference proteome</keyword>
<keyword id="KW-0678">Repressor</keyword>
<keyword id="KW-0687">Ribonucleoprotein</keyword>
<keyword id="KW-0689">Ribosomal protein</keyword>
<keyword id="KW-0694">RNA-binding</keyword>
<keyword id="KW-0699">rRNA-binding</keyword>
<keyword id="KW-0810">Translation regulation</keyword>
<keyword id="KW-0820">tRNA-binding</keyword>
<proteinExistence type="inferred from homology"/>
<dbReference type="EMBL" id="AL935263">
    <property type="protein sequence ID" value="CCC78100.1"/>
    <property type="molecule type" value="Genomic_DNA"/>
</dbReference>
<dbReference type="RefSeq" id="WP_003640943.1">
    <property type="nucleotide sequence ID" value="NC_004567.2"/>
</dbReference>
<dbReference type="RefSeq" id="YP_004888614.1">
    <property type="nucleotide sequence ID" value="NC_004567.2"/>
</dbReference>
<dbReference type="SMR" id="Q88YW9"/>
<dbReference type="STRING" id="220668.lp_0620"/>
<dbReference type="EnsemblBacteria" id="CCC78100">
    <property type="protein sequence ID" value="CCC78100"/>
    <property type="gene ID" value="lp_0620"/>
</dbReference>
<dbReference type="GeneID" id="89668261"/>
<dbReference type="KEGG" id="lpl:lp_0620"/>
<dbReference type="PATRIC" id="fig|220668.9.peg.520"/>
<dbReference type="eggNOG" id="COG0081">
    <property type="taxonomic scope" value="Bacteria"/>
</dbReference>
<dbReference type="HOGENOM" id="CLU_062853_0_0_9"/>
<dbReference type="OrthoDB" id="9803740at2"/>
<dbReference type="PhylomeDB" id="Q88YW9"/>
<dbReference type="Proteomes" id="UP000000432">
    <property type="component" value="Chromosome"/>
</dbReference>
<dbReference type="GO" id="GO:0015934">
    <property type="term" value="C:large ribosomal subunit"/>
    <property type="evidence" value="ECO:0007669"/>
    <property type="project" value="InterPro"/>
</dbReference>
<dbReference type="GO" id="GO:0019843">
    <property type="term" value="F:rRNA binding"/>
    <property type="evidence" value="ECO:0007669"/>
    <property type="project" value="UniProtKB-UniRule"/>
</dbReference>
<dbReference type="GO" id="GO:0003735">
    <property type="term" value="F:structural constituent of ribosome"/>
    <property type="evidence" value="ECO:0007669"/>
    <property type="project" value="InterPro"/>
</dbReference>
<dbReference type="GO" id="GO:0000049">
    <property type="term" value="F:tRNA binding"/>
    <property type="evidence" value="ECO:0007669"/>
    <property type="project" value="UniProtKB-KW"/>
</dbReference>
<dbReference type="GO" id="GO:0006417">
    <property type="term" value="P:regulation of translation"/>
    <property type="evidence" value="ECO:0007669"/>
    <property type="project" value="UniProtKB-KW"/>
</dbReference>
<dbReference type="GO" id="GO:0006412">
    <property type="term" value="P:translation"/>
    <property type="evidence" value="ECO:0007669"/>
    <property type="project" value="UniProtKB-UniRule"/>
</dbReference>
<dbReference type="CDD" id="cd00403">
    <property type="entry name" value="Ribosomal_L1"/>
    <property type="match status" value="1"/>
</dbReference>
<dbReference type="FunFam" id="3.40.50.790:FF:000001">
    <property type="entry name" value="50S ribosomal protein L1"/>
    <property type="match status" value="1"/>
</dbReference>
<dbReference type="Gene3D" id="3.30.190.20">
    <property type="match status" value="1"/>
</dbReference>
<dbReference type="Gene3D" id="3.40.50.790">
    <property type="match status" value="1"/>
</dbReference>
<dbReference type="HAMAP" id="MF_01318_B">
    <property type="entry name" value="Ribosomal_uL1_B"/>
    <property type="match status" value="1"/>
</dbReference>
<dbReference type="InterPro" id="IPR005878">
    <property type="entry name" value="Ribosom_uL1_bac-type"/>
</dbReference>
<dbReference type="InterPro" id="IPR002143">
    <property type="entry name" value="Ribosomal_uL1"/>
</dbReference>
<dbReference type="InterPro" id="IPR023674">
    <property type="entry name" value="Ribosomal_uL1-like"/>
</dbReference>
<dbReference type="InterPro" id="IPR028364">
    <property type="entry name" value="Ribosomal_uL1/biogenesis"/>
</dbReference>
<dbReference type="InterPro" id="IPR016095">
    <property type="entry name" value="Ribosomal_uL1_3-a/b-sand"/>
</dbReference>
<dbReference type="InterPro" id="IPR023673">
    <property type="entry name" value="Ribosomal_uL1_CS"/>
</dbReference>
<dbReference type="NCBIfam" id="TIGR01169">
    <property type="entry name" value="rplA_bact"/>
    <property type="match status" value="1"/>
</dbReference>
<dbReference type="PANTHER" id="PTHR36427">
    <property type="entry name" value="54S RIBOSOMAL PROTEIN L1, MITOCHONDRIAL"/>
    <property type="match status" value="1"/>
</dbReference>
<dbReference type="PANTHER" id="PTHR36427:SF3">
    <property type="entry name" value="LARGE RIBOSOMAL SUBUNIT PROTEIN UL1M"/>
    <property type="match status" value="1"/>
</dbReference>
<dbReference type="Pfam" id="PF00687">
    <property type="entry name" value="Ribosomal_L1"/>
    <property type="match status" value="1"/>
</dbReference>
<dbReference type="PIRSF" id="PIRSF002155">
    <property type="entry name" value="Ribosomal_L1"/>
    <property type="match status" value="1"/>
</dbReference>
<dbReference type="SUPFAM" id="SSF56808">
    <property type="entry name" value="Ribosomal protein L1"/>
    <property type="match status" value="1"/>
</dbReference>
<dbReference type="PROSITE" id="PS01199">
    <property type="entry name" value="RIBOSOMAL_L1"/>
    <property type="match status" value="1"/>
</dbReference>